<evidence type="ECO:0000250" key="1"/>
<evidence type="ECO:0000250" key="2">
    <source>
        <dbReference type="UniProtKB" id="Q64326"/>
    </source>
</evidence>
<evidence type="ECO:0000255" key="3"/>
<evidence type="ECO:0000255" key="4">
    <source>
        <dbReference type="PROSITE-ProRule" id="PRU00521"/>
    </source>
</evidence>
<evidence type="ECO:0000269" key="5">
    <source>
    </source>
</evidence>
<evidence type="ECO:0000269" key="6">
    <source>
    </source>
</evidence>
<evidence type="ECO:0000269" key="7">
    <source>
    </source>
</evidence>
<evidence type="ECO:0000269" key="8">
    <source>
    </source>
</evidence>
<evidence type="ECO:0000269" key="9">
    <source>
    </source>
</evidence>
<evidence type="ECO:0000269" key="10">
    <source>
    </source>
</evidence>
<evidence type="ECO:0000269" key="11">
    <source>
    </source>
</evidence>
<evidence type="ECO:0000269" key="12">
    <source>
    </source>
</evidence>
<evidence type="ECO:0000269" key="13">
    <source>
    </source>
</evidence>
<evidence type="ECO:0000269" key="14">
    <source>
    </source>
</evidence>
<evidence type="ECO:0000269" key="15">
    <source>
    </source>
</evidence>
<evidence type="ECO:0000269" key="16">
    <source>
    </source>
</evidence>
<evidence type="ECO:0000269" key="17">
    <source>
    </source>
</evidence>
<evidence type="ECO:0000269" key="18">
    <source ref="17"/>
</evidence>
<evidence type="ECO:0007744" key="19">
    <source>
        <dbReference type="PDB" id="8GY7"/>
    </source>
</evidence>
<evidence type="ECO:0007829" key="20">
    <source>
        <dbReference type="PDB" id="8GY7"/>
    </source>
</evidence>
<organism>
    <name type="scientific">Homo sapiens</name>
    <name type="common">Human</name>
    <dbReference type="NCBI Taxonomy" id="9606"/>
    <lineage>
        <taxon>Eukaryota</taxon>
        <taxon>Metazoa</taxon>
        <taxon>Chordata</taxon>
        <taxon>Craniata</taxon>
        <taxon>Vertebrata</taxon>
        <taxon>Euteleostomi</taxon>
        <taxon>Mammalia</taxon>
        <taxon>Eutheria</taxon>
        <taxon>Euarchontoglires</taxon>
        <taxon>Primates</taxon>
        <taxon>Haplorrhini</taxon>
        <taxon>Catarrhini</taxon>
        <taxon>Hominidae</taxon>
        <taxon>Homo</taxon>
    </lineage>
</organism>
<reference key="1">
    <citation type="journal article" date="1992" name="Science">
        <title>The cloning of a family of genes that encode the melanocortin receptors.</title>
        <authorList>
            <person name="Mountjoy K.G."/>
            <person name="Robbins L.S."/>
            <person name="Mortrud M."/>
            <person name="Cone R.D."/>
        </authorList>
    </citation>
    <scope>NUCLEOTIDE SEQUENCE [GENOMIC DNA]</scope>
    <source>
        <tissue>Skin</tissue>
    </source>
</reference>
<reference key="2">
    <citation type="submission" date="2001-07" db="EMBL/GenBank/DDBJ databases">
        <title>Genome-wide discovery and analysis of human seven transmembrane helix receptor genes.</title>
        <authorList>
            <person name="Suwa M."/>
            <person name="Sato T."/>
            <person name="Okouchi I."/>
            <person name="Arita M."/>
            <person name="Futami K."/>
            <person name="Matsumoto S."/>
            <person name="Tsutsumi S."/>
            <person name="Aburatani H."/>
            <person name="Asai K."/>
            <person name="Akiyama Y."/>
        </authorList>
    </citation>
    <scope>NUCLEOTIDE SEQUENCE [GENOMIC DNA]</scope>
</reference>
<reference key="3">
    <citation type="submission" date="2003-01" db="EMBL/GenBank/DDBJ databases">
        <title>cDNA clones of human proteins involved in signal transduction sequenced by the Guthrie cDNA resource center (www.cdna.org).</title>
        <authorList>
            <person name="Kopatz S.A."/>
            <person name="Aronstam R.S."/>
            <person name="Sharma S.V."/>
        </authorList>
    </citation>
    <scope>NUCLEOTIDE SEQUENCE [LARGE SCALE MRNA]</scope>
</reference>
<reference key="4">
    <citation type="journal article" date="2004" name="Nat. Genet.">
        <title>Complete sequencing and characterization of 21,243 full-length human cDNAs.</title>
        <authorList>
            <person name="Ota T."/>
            <person name="Suzuki Y."/>
            <person name="Nishikawa T."/>
            <person name="Otsuki T."/>
            <person name="Sugiyama T."/>
            <person name="Irie R."/>
            <person name="Wakamatsu A."/>
            <person name="Hayashi K."/>
            <person name="Sato H."/>
            <person name="Nagai K."/>
            <person name="Kimura K."/>
            <person name="Makita H."/>
            <person name="Sekine M."/>
            <person name="Obayashi M."/>
            <person name="Nishi T."/>
            <person name="Shibahara T."/>
            <person name="Tanaka T."/>
            <person name="Ishii S."/>
            <person name="Yamamoto J."/>
            <person name="Saito K."/>
            <person name="Kawai Y."/>
            <person name="Isono Y."/>
            <person name="Nakamura Y."/>
            <person name="Nagahari K."/>
            <person name="Murakami K."/>
            <person name="Yasuda T."/>
            <person name="Iwayanagi T."/>
            <person name="Wagatsuma M."/>
            <person name="Shiratori A."/>
            <person name="Sudo H."/>
            <person name="Hosoiri T."/>
            <person name="Kaku Y."/>
            <person name="Kodaira H."/>
            <person name="Kondo H."/>
            <person name="Sugawara M."/>
            <person name="Takahashi M."/>
            <person name="Kanda K."/>
            <person name="Yokoi T."/>
            <person name="Furuya T."/>
            <person name="Kikkawa E."/>
            <person name="Omura Y."/>
            <person name="Abe K."/>
            <person name="Kamihara K."/>
            <person name="Katsuta N."/>
            <person name="Sato K."/>
            <person name="Tanikawa M."/>
            <person name="Yamazaki M."/>
            <person name="Ninomiya K."/>
            <person name="Ishibashi T."/>
            <person name="Yamashita H."/>
            <person name="Murakawa K."/>
            <person name="Fujimori K."/>
            <person name="Tanai H."/>
            <person name="Kimata M."/>
            <person name="Watanabe M."/>
            <person name="Hiraoka S."/>
            <person name="Chiba Y."/>
            <person name="Ishida S."/>
            <person name="Ono Y."/>
            <person name="Takiguchi S."/>
            <person name="Watanabe S."/>
            <person name="Yosida M."/>
            <person name="Hotuta T."/>
            <person name="Kusano J."/>
            <person name="Kanehori K."/>
            <person name="Takahashi-Fujii A."/>
            <person name="Hara H."/>
            <person name="Tanase T.-O."/>
            <person name="Nomura Y."/>
            <person name="Togiya S."/>
            <person name="Komai F."/>
            <person name="Hara R."/>
            <person name="Takeuchi K."/>
            <person name="Arita M."/>
            <person name="Imose N."/>
            <person name="Musashino K."/>
            <person name="Yuuki H."/>
            <person name="Oshima A."/>
            <person name="Sasaki N."/>
            <person name="Aotsuka S."/>
            <person name="Yoshikawa Y."/>
            <person name="Matsunawa H."/>
            <person name="Ichihara T."/>
            <person name="Shiohata N."/>
            <person name="Sano S."/>
            <person name="Moriya S."/>
            <person name="Momiyama H."/>
            <person name="Satoh N."/>
            <person name="Takami S."/>
            <person name="Terashima Y."/>
            <person name="Suzuki O."/>
            <person name="Nakagawa S."/>
            <person name="Senoh A."/>
            <person name="Mizoguchi H."/>
            <person name="Goto Y."/>
            <person name="Shimizu F."/>
            <person name="Wakebe H."/>
            <person name="Hishigaki H."/>
            <person name="Watanabe T."/>
            <person name="Sugiyama A."/>
            <person name="Takemoto M."/>
            <person name="Kawakami B."/>
            <person name="Yamazaki M."/>
            <person name="Watanabe K."/>
            <person name="Kumagai A."/>
            <person name="Itakura S."/>
            <person name="Fukuzumi Y."/>
            <person name="Fujimori Y."/>
            <person name="Komiyama M."/>
            <person name="Tashiro H."/>
            <person name="Tanigami A."/>
            <person name="Fujiwara T."/>
            <person name="Ono T."/>
            <person name="Yamada K."/>
            <person name="Fujii Y."/>
            <person name="Ozaki K."/>
            <person name="Hirao M."/>
            <person name="Ohmori Y."/>
            <person name="Kawabata A."/>
            <person name="Hikiji T."/>
            <person name="Kobatake N."/>
            <person name="Inagaki H."/>
            <person name="Ikema Y."/>
            <person name="Okamoto S."/>
            <person name="Okitani R."/>
            <person name="Kawakami T."/>
            <person name="Noguchi S."/>
            <person name="Itoh T."/>
            <person name="Shigeta K."/>
            <person name="Senba T."/>
            <person name="Matsumura K."/>
            <person name="Nakajima Y."/>
            <person name="Mizuno T."/>
            <person name="Morinaga M."/>
            <person name="Sasaki M."/>
            <person name="Togashi T."/>
            <person name="Oyama M."/>
            <person name="Hata H."/>
            <person name="Watanabe M."/>
            <person name="Komatsu T."/>
            <person name="Mizushima-Sugano J."/>
            <person name="Satoh T."/>
            <person name="Shirai Y."/>
            <person name="Takahashi Y."/>
            <person name="Nakagawa K."/>
            <person name="Okumura K."/>
            <person name="Nagase T."/>
            <person name="Nomura N."/>
            <person name="Kikuchi H."/>
            <person name="Masuho Y."/>
            <person name="Yamashita R."/>
            <person name="Nakai K."/>
            <person name="Yada T."/>
            <person name="Nakamura Y."/>
            <person name="Ohara O."/>
            <person name="Isogai T."/>
            <person name="Sugano S."/>
        </authorList>
    </citation>
    <scope>NUCLEOTIDE SEQUENCE [LARGE SCALE MRNA]</scope>
    <source>
        <tissue>Adrenal gland</tissue>
    </source>
</reference>
<reference key="5">
    <citation type="submission" date="2005-09" db="EMBL/GenBank/DDBJ databases">
        <authorList>
            <person name="Mural R.J."/>
            <person name="Istrail S."/>
            <person name="Sutton G."/>
            <person name="Florea L."/>
            <person name="Halpern A.L."/>
            <person name="Mobarry C.M."/>
            <person name="Lippert R."/>
            <person name="Walenz B."/>
            <person name="Shatkay H."/>
            <person name="Dew I."/>
            <person name="Miller J.R."/>
            <person name="Flanigan M.J."/>
            <person name="Edwards N.J."/>
            <person name="Bolanos R."/>
            <person name="Fasulo D."/>
            <person name="Halldorsson B.V."/>
            <person name="Hannenhalli S."/>
            <person name="Turner R."/>
            <person name="Yooseph S."/>
            <person name="Lu F."/>
            <person name="Nusskern D.R."/>
            <person name="Shue B.C."/>
            <person name="Zheng X.H."/>
            <person name="Zhong F."/>
            <person name="Delcher A.L."/>
            <person name="Huson D.H."/>
            <person name="Kravitz S.A."/>
            <person name="Mouchard L."/>
            <person name="Reinert K."/>
            <person name="Remington K.A."/>
            <person name="Clark A.G."/>
            <person name="Waterman M.S."/>
            <person name="Eichler E.E."/>
            <person name="Adams M.D."/>
            <person name="Hunkapiller M.W."/>
            <person name="Myers E.W."/>
            <person name="Venter J.C."/>
        </authorList>
    </citation>
    <scope>NUCLEOTIDE SEQUENCE [LARGE SCALE GENOMIC DNA]</scope>
</reference>
<reference key="6">
    <citation type="journal article" date="2004" name="Genome Res.">
        <title>The status, quality, and expansion of the NIH full-length cDNA project: the Mammalian Gene Collection (MGC).</title>
        <authorList>
            <consortium name="The MGC Project Team"/>
        </authorList>
    </citation>
    <scope>NUCLEOTIDE SEQUENCE [LARGE SCALE MRNA]</scope>
</reference>
<reference key="7">
    <citation type="journal article" date="1993" name="J. Biol. Chem.">
        <title>Molecular cloning of a novel melanocortin receptor.</title>
        <authorList>
            <person name="Gantz I."/>
            <person name="Konda Y."/>
            <person name="Tashiro T."/>
            <person name="Shimoto Y."/>
            <person name="Miwa H."/>
            <person name="Munzert G."/>
            <person name="Watson S.J."/>
            <person name="Delvalle J."/>
            <person name="Yamada T."/>
        </authorList>
    </citation>
    <scope>NUCLEOTIDE SEQUENCE [GENOMIC DNA] OF 1-293</scope>
</reference>
<reference key="8">
    <citation type="journal article" date="2005" name="Nat. Genet.">
        <title>Mutations in MRAP, encoding a new interacting partner of the ACTH receptor, cause familial glucocorticoid deficiency type 2.</title>
        <authorList>
            <person name="Metherell L.A."/>
            <person name="Chapple J.P."/>
            <person name="Cooray S."/>
            <person name="David A."/>
            <person name="Becker C."/>
            <person name="Rueschendorf F."/>
            <person name="Naville D."/>
            <person name="Begeot M."/>
            <person name="Khoo B."/>
            <person name="Nuernberg P."/>
            <person name="Huebner A."/>
            <person name="Cheetham M.E."/>
            <person name="Clark A.J.L."/>
        </authorList>
    </citation>
    <scope>INTERACTION WITH MRAP</scope>
</reference>
<reference key="9">
    <citation type="journal article" date="2007" name="Am. J. Physiol.">
        <title>Structural insights into the role of the ACTH receptor cysteine residues on receptor function.</title>
        <authorList>
            <person name="Yang Y."/>
            <person name="Chen M."/>
            <person name="Kesterson R.A. Jr."/>
            <person name="Harmon C.M."/>
        </authorList>
    </citation>
    <scope>FUNCTION</scope>
    <scope>MUTAGENESIS OF CYS-21; CYS-245; CYS-251 AND CYS-253</scope>
    <scope>INTERACTION WITH ACTH</scope>
</reference>
<reference key="10">
    <citation type="journal article" date="2009" name="Proc. Natl. Acad. Sci. U.S.A.">
        <title>MRAP and MRAP2 are bidirectional regulators of the melanocortin receptor family.</title>
        <authorList>
            <person name="Chan L.F."/>
            <person name="Webb T.R."/>
            <person name="Chung T.T."/>
            <person name="Meimaridou E."/>
            <person name="Cooray S.N."/>
            <person name="Guasti L."/>
            <person name="Chapple J.P."/>
            <person name="Egertova M."/>
            <person name="Elphick M.R."/>
            <person name="Cheetham M.E."/>
            <person name="Metherell L.A."/>
            <person name="Clark A.J."/>
        </authorList>
    </citation>
    <scope>FUNCTION</scope>
    <scope>INTERACTION WITH MRAP AND MRAP2</scope>
</reference>
<reference key="11">
    <citation type="journal article" date="2009" name="J. Biol. Chem.">
        <title>Opposite effects of the melanocortin-2 (MC2) receptor accessory protein MRAP on MC2 and MC5 receptor dimerization and trafficking.</title>
        <authorList>
            <person name="Sebag J.A."/>
            <person name="Hinkle P.M."/>
        </authorList>
    </citation>
    <scope>FUNCTION</scope>
    <scope>SUBUNIT</scope>
    <scope>INTERACTION WITH MRAP</scope>
    <scope>SUBCELLULAR LOCATION</scope>
</reference>
<reference key="12">
    <citation type="journal article" date="2010" name="Sci. Signal.">
        <title>Regulation of G protein-coupled receptor signaling: specific dominant-negative effects of melanocortin 2 receptor accessory protein 2.</title>
        <authorList>
            <person name="Sebag J.A."/>
            <person name="Hinkle P.M."/>
        </authorList>
    </citation>
    <scope>FUNCTION</scope>
    <scope>INTERACTION WITH MRAP AND MRAP2</scope>
</reference>
<reference key="13">
    <citation type="journal article" date="2011" name="Endocrinology">
        <title>The E3 ubiquitin ligase Mahogunin ubiquitinates the melanocortin 2 receptor.</title>
        <authorList>
            <person name="Cooray S.N."/>
            <person name="Guasti L."/>
            <person name="Clark A.J."/>
        </authorList>
    </citation>
    <scope>UBIQTINATION BY MGRN1</scope>
    <scope>SUBCELLULAR LOCATION</scope>
</reference>
<reference evidence="19" key="14">
    <citation type="journal article" date="2023" name="Cell Res.">
        <title>Structural basis of signaling regulation of the human melanocortin-2 receptor by MRAP1.</title>
        <authorList>
            <person name="Luo P."/>
            <person name="Feng W."/>
            <person name="Ma S."/>
            <person name="Dai A."/>
            <person name="Wu K."/>
            <person name="Chen X."/>
            <person name="Yuan Q."/>
            <person name="Cai X."/>
            <person name="Yang D."/>
            <person name="Wang M.W."/>
            <person name="Eric Xu H."/>
            <person name="Jiang Y."/>
        </authorList>
    </citation>
    <scope>STRUCTURE BY ELECTRON MICROSCOPY (3.30 ANGSTROMS) OF 2-297</scope>
    <scope>DISULFIDE BONDS</scope>
    <scope>FUNCTION</scope>
    <scope>INTERACTION WITH ACTH</scope>
</reference>
<reference key="15">
    <citation type="journal article" date="1993" name="Lancet">
        <title>Familial glucocorticoid deficiency associated with point mutation in the adrenocorticotropin receptor.</title>
        <authorList>
            <person name="Clark A.J.L."/>
            <person name="McLoughlin L."/>
            <person name="Grossman A."/>
        </authorList>
    </citation>
    <scope>VARIANT GCCD1 ILE-74</scope>
</reference>
<reference key="16">
    <citation type="journal article" date="1993" name="J. Clin. Invest.">
        <title>Hereditary isolated glucocorticoid deficiency is associated with abnormalities of the adrenocorticotropin receptor gene.</title>
        <authorList>
            <person name="Tsigos C."/>
            <person name="Arai K."/>
            <person name="Hung W."/>
            <person name="Chrousos G.P."/>
        </authorList>
    </citation>
    <scope>VARIANT GCCD1 ARG-120</scope>
</reference>
<reference key="17">
    <citation type="journal article" date="1994" name="Trends Endocrinol. Metab.">
        <title>Molecular insights into inherited ACTH resistance syndromes.</title>
        <authorList>
            <person name="Clark A.J.L."/>
            <person name="Weber A."/>
        </authorList>
    </citation>
    <scope>VARIANTS GCCD1 CYS-128 AND HIS-146</scope>
</reference>
<reference key="18">
    <citation type="journal article" date="1996" name="J. Clin. Endocrinol. Metab.">
        <title>Demonstration by transfection studies that mutations in the adrenocorticotropin receptor gene are one cause of the hereditary syndrome of glucocorticoid deficiency.</title>
        <authorList>
            <person name="Naville D."/>
            <person name="Barjhoux L."/>
            <person name="Jaillard C."/>
            <person name="Faury D."/>
            <person name="Despert F."/>
            <person name="Esteva B."/>
            <person name="Durand P."/>
            <person name="Saez J.M."/>
            <person name="Begeot M."/>
        </authorList>
    </citation>
    <scope>VARIANTS GCCD1 ASN-107 AND PHE-251</scope>
</reference>
<reference key="19">
    <citation type="journal article" date="2000" name="Clin. Endocrinol. (Oxf.)">
        <title>Novel mutations of the ACTH receptor gene in a female adult patient with adrenal unresponsiveness to ACTH.</title>
        <authorList>
            <person name="Ishii T."/>
            <person name="Ogata T."/>
            <person name="Sasaki G."/>
            <person name="Sato S."/>
            <person name="Kinoshita E.I."/>
            <person name="Matsuo N."/>
        </authorList>
    </citation>
    <scope>VARIANTS GCCD1 ASN-103 AND TRP-137</scope>
</reference>
<reference key="20">
    <citation type="journal article" date="2002" name="J. Clin. Endocrinol. Metab.">
        <title>Clinical, genetic, and functional characterization of adrenocorticotropin receptor mutations using a novel receptor assay.</title>
        <authorList>
            <person name="Fluck C.E."/>
            <person name="Martens J.W.M."/>
            <person name="Conte F.A."/>
            <person name="Miller W.L."/>
        </authorList>
    </citation>
    <scope>VARIANTS GCCD1 ILE-74; TRP-137 AND CYS-254</scope>
</reference>
<reference key="21">
    <citation type="journal article" date="2010" name="Hum. Genet.">
        <title>Novel human pathological mutations. Gene symbol: MC2R. Disease: Glucocorticoid deficiency.</title>
        <authorList>
            <person name="Mueller O.T."/>
            <person name="Coovadia A."/>
        </authorList>
    </citation>
    <scope>VARIANT PRO-137</scope>
</reference>
<protein>
    <recommendedName>
        <fullName>Adrenocorticotropic hormone receptor</fullName>
        <shortName>ACTH receptor</shortName>
        <shortName>ACTH-R</shortName>
    </recommendedName>
    <alternativeName>
        <fullName>Adrenocorticotropin receptor</fullName>
    </alternativeName>
    <alternativeName>
        <fullName>Melanocortin receptor 2</fullName>
        <shortName>MC2-R</shortName>
    </alternativeName>
</protein>
<keyword id="KW-0002">3D-structure</keyword>
<keyword id="KW-1003">Cell membrane</keyword>
<keyword id="KW-0225">Disease variant</keyword>
<keyword id="KW-1015">Disulfide bond</keyword>
<keyword id="KW-0297">G-protein coupled receptor</keyword>
<keyword id="KW-0325">Glycoprotein</keyword>
<keyword id="KW-0449">Lipoprotein</keyword>
<keyword id="KW-0472">Membrane</keyword>
<keyword id="KW-0564">Palmitate</keyword>
<keyword id="KW-0675">Receptor</keyword>
<keyword id="KW-1185">Reference proteome</keyword>
<keyword id="KW-0807">Transducer</keyword>
<keyword id="KW-0812">Transmembrane</keyword>
<keyword id="KW-1133">Transmembrane helix</keyword>
<keyword id="KW-0832">Ubl conjugation</keyword>
<comment type="function">
    <text evidence="2 8 9 10 12 14">Hormone receptor primarily expressed in adrenal cortex that plays a key role in regulating adrenocortical function (PubMed:36588120). Upon corticotropin (ACTH) binding, facilitates the release of adrenal glucocorticoids, including cortisol and corticosterone. In addition, MC2R is required for fetal and neonatal adrenal gland development (By similarity). Mechanistically, activates adenylate cyclase (cAMP), the MAPK cascade as well as the cAMP-dependent protein kinase A pathway leading to steroidogenic factor 1/NR5A1-mediated transcriptional activation (By similarity).</text>
</comment>
<comment type="subunit">
    <text evidence="7 8 9 10 12 14">Homodimer (PubMed:19535343). Interacts with corticotropin (ACTH)(PubMed:17596328, PubMed:36588120). Interacts with MRAP; this interaction targets MC2R to the plasma membrane (PubMed:19535343). Interacts with MRAP2; competing with MRAP for binding to MC2R and impairing the binding of corticotropin (ACTH).</text>
</comment>
<comment type="interaction">
    <interactant intactId="EBI-9537171">
        <id>Q01718</id>
    </interactant>
    <interactant intactId="EBI-9538727">
        <id>Q8TCY5</id>
        <label>MRAP</label>
    </interactant>
    <organismsDiffer>false</organismsDiffer>
    <experiments>3</experiments>
</comment>
<comment type="interaction">
    <interactant intactId="EBI-9537171">
        <id>Q01718</id>
    </interactant>
    <interactant intactId="EBI-21991233">
        <id>Q8TCY5-1</id>
        <label>MRAP</label>
    </interactant>
    <organismsDiffer>false</organismsDiffer>
    <experiments>3</experiments>
</comment>
<comment type="interaction">
    <interactant intactId="EBI-9537171">
        <id>Q01718</id>
    </interactant>
    <interactant intactId="EBI-9537218">
        <id>Q96G30</id>
        <label>MRAP2</label>
    </interactant>
    <organismsDiffer>false</organismsDiffer>
    <experiments>2</experiments>
</comment>
<comment type="subcellular location">
    <subcellularLocation>
        <location evidence="10 13">Cell membrane</location>
        <topology>Multi-pass membrane protein</topology>
    </subcellularLocation>
</comment>
<comment type="tissue specificity">
    <text>Melanocytes and corticoadrenal tissue.</text>
</comment>
<comment type="PTM">
    <text evidence="13">Ubiquitinated by MGRN1 that may be involved in post-endocytic trafficking and/or degradation of internalized receptor.</text>
</comment>
<comment type="disease" evidence="5 6 15 16 17">
    <disease id="DI-01669">
        <name>Glucocorticoid deficiency 1</name>
        <acronym>GCCD1</acronym>
        <description>A form of glucocorticoid deficiency, a rare autosomal recessive disorder characterized by resistance to ACTH action on the adrenal cortex, adrenal insufficiency and an inability of the adrenal cortex to produce cortisol. It usually presents in the neonatal period or in early childhood with episodes of hypoglycemia and other symptoms related to cortisol deficiency, including failure to thrive, recurrent illnesses or infections, convulsions, and shock. In a small number of patients hypoglycemia can be sufficiently severe and persistent that it leads to serious long-term neurological damage or death. The diagnosis is readily confirmed with a low plasma cortisol measurement in the presence of an elevated ACTH level, and normal aldosterone and plasma renin measurements.</description>
        <dbReference type="MIM" id="202200"/>
    </disease>
    <text>The disease is caused by variants affecting the gene represented in this entry.</text>
</comment>
<comment type="similarity">
    <text evidence="4">Belongs to the G-protein coupled receptor 1 family.</text>
</comment>
<feature type="chain" id="PRO_0000069054" description="Adrenocorticotropic hormone receptor">
    <location>
        <begin position="1"/>
        <end position="297"/>
    </location>
</feature>
<feature type="topological domain" description="Extracellular" evidence="1">
    <location>
        <begin position="1"/>
        <end position="23"/>
    </location>
</feature>
<feature type="transmembrane region" description="Helical; Name=1" evidence="1">
    <location>
        <begin position="24"/>
        <end position="49"/>
    </location>
</feature>
<feature type="topological domain" description="Cytoplasmic" evidence="1">
    <location>
        <begin position="50"/>
        <end position="58"/>
    </location>
</feature>
<feature type="transmembrane region" description="Helical; Name=2" evidence="1">
    <location>
        <begin position="59"/>
        <end position="79"/>
    </location>
</feature>
<feature type="topological domain" description="Extracellular" evidence="1">
    <location>
        <begin position="80"/>
        <end position="104"/>
    </location>
</feature>
<feature type="transmembrane region" description="Helical; Name=3" evidence="1">
    <location>
        <begin position="105"/>
        <end position="126"/>
    </location>
</feature>
<feature type="topological domain" description="Cytoplasmic" evidence="1">
    <location>
        <begin position="127"/>
        <end position="147"/>
    </location>
</feature>
<feature type="transmembrane region" description="Helical; Name=4" evidence="1">
    <location>
        <begin position="148"/>
        <end position="168"/>
    </location>
</feature>
<feature type="topological domain" description="Extracellular" evidence="1">
    <location>
        <begin position="169"/>
        <end position="180"/>
    </location>
</feature>
<feature type="transmembrane region" description="Helical; Name=5" evidence="1">
    <location>
        <begin position="181"/>
        <end position="199"/>
    </location>
</feature>
<feature type="topological domain" description="Cytoplasmic" evidence="1">
    <location>
        <begin position="200"/>
        <end position="217"/>
    </location>
</feature>
<feature type="transmembrane region" description="Helical; Name=6" evidence="1">
    <location>
        <begin position="218"/>
        <end position="244"/>
    </location>
</feature>
<feature type="topological domain" description="Extracellular" evidence="1">
    <location>
        <begin position="245"/>
        <end position="256"/>
    </location>
</feature>
<feature type="transmembrane region" description="Helical; Name=7" evidence="1">
    <location>
        <begin position="257"/>
        <end position="278"/>
    </location>
</feature>
<feature type="topological domain" description="Cytoplasmic" evidence="1">
    <location>
        <begin position="279"/>
        <end position="297"/>
    </location>
</feature>
<feature type="lipid moiety-binding region" description="S-palmitoyl cysteine" evidence="3">
    <location>
        <position position="293"/>
    </location>
</feature>
<feature type="glycosylation site" description="N-linked (GlcNAc...) asparagine" evidence="3">
    <location>
        <position position="12"/>
    </location>
</feature>
<feature type="glycosylation site" description="N-linked (GlcNAc...) asparagine" evidence="3">
    <location>
        <position position="17"/>
    </location>
</feature>
<feature type="disulfide bond" evidence="14 19">
    <location>
        <begin position="21"/>
        <end position="253"/>
    </location>
</feature>
<feature type="disulfide bond" evidence="14 19">
    <location>
        <begin position="245"/>
        <end position="251"/>
    </location>
</feature>
<feature type="sequence variant" id="VAR_003509" description="In dbSNP:rs28926178.">
    <original>P</original>
    <variation>R</variation>
    <location>
        <position position="27"/>
    </location>
</feature>
<feature type="sequence variant" id="VAR_003510" description="In GCCD1; complete loss of activity; dbSNP:rs104894658." evidence="6 15">
    <original>S</original>
    <variation>I</variation>
    <location>
        <position position="74"/>
    </location>
</feature>
<feature type="sequence variant" id="VAR_010702" description="In GCCD1; dbSNP:rs768093045." evidence="5">
    <original>D</original>
    <variation>N</variation>
    <location>
        <position position="103"/>
    </location>
</feature>
<feature type="sequence variant" id="VAR_015095" description="In GCCD1; dbSNP:rs104894661." evidence="17">
    <original>D</original>
    <variation>N</variation>
    <location>
        <position position="107"/>
    </location>
</feature>
<feature type="sequence variant" id="VAR_003511" description="In GCCD1; dbSNP:rs104894656." evidence="16">
    <original>S</original>
    <variation>R</variation>
    <location>
        <position position="120"/>
    </location>
</feature>
<feature type="sequence variant" id="VAR_003512" description="In GCCD1; dbSNP:rs104894657." evidence="18">
    <original>R</original>
    <variation>C</variation>
    <location>
        <position position="128"/>
    </location>
</feature>
<feature type="sequence variant" id="VAR_064986" description="Found in a glucocorticoid deficiency patient carrying also mutation I-74; dbSNP:rs1208417750." evidence="11">
    <original>R</original>
    <variation>P</variation>
    <location>
        <position position="137"/>
    </location>
</feature>
<feature type="sequence variant" id="VAR_010703" description="In GCCD1; partial loss of ACTIVITY; dbSNP:rs104894660." evidence="5 6">
    <original>R</original>
    <variation>W</variation>
    <location>
        <position position="137"/>
    </location>
</feature>
<feature type="sequence variant" id="VAR_003513" description="In GCCD1; dbSNP:rs758709668." evidence="18">
    <original>R</original>
    <variation>H</variation>
    <location>
        <position position="146"/>
    </location>
</feature>
<feature type="sequence variant" id="VAR_015096" description="In GCCD1; dbSNP:rs104894662." evidence="17">
    <original>C</original>
    <variation>F</variation>
    <location>
        <position position="251"/>
    </location>
</feature>
<feature type="sequence variant" id="VAR_015295" description="In GCCD1; complete loss of activity; dbSNP:rs28940892." evidence="6">
    <original>Y</original>
    <variation>C</variation>
    <location>
        <position position="254"/>
    </location>
</feature>
<feature type="sequence variant" id="VAR_049369" description="In dbSNP:rs28926182.">
    <original>F</original>
    <variation>C</variation>
    <location>
        <position position="278"/>
    </location>
</feature>
<feature type="mutagenesis site" description="Significantly reduced ACTH binding." evidence="8">
    <original>C</original>
    <variation>S</variation>
    <location>
        <position position="21"/>
    </location>
</feature>
<feature type="mutagenesis site" description="Significantly reduced ACTH binding." evidence="8">
    <original>C</original>
    <variation>S</variation>
    <location>
        <position position="245"/>
    </location>
</feature>
<feature type="mutagenesis site" description="Significantly reduced ACTH binding." evidence="8">
    <original>C</original>
    <variation>S</variation>
    <location>
        <position position="251"/>
    </location>
</feature>
<feature type="mutagenesis site" description="Significantly reduced ACTH binding." evidence="8">
    <original>C</original>
    <variation>S</variation>
    <location>
        <position position="253"/>
    </location>
</feature>
<feature type="helix" evidence="20">
    <location>
        <begin position="28"/>
        <end position="48"/>
    </location>
</feature>
<feature type="helix" evidence="20">
    <location>
        <begin position="58"/>
        <end position="87"/>
    </location>
</feature>
<feature type="turn" evidence="20">
    <location>
        <begin position="88"/>
        <end position="90"/>
    </location>
</feature>
<feature type="strand" evidence="20">
    <location>
        <begin position="94"/>
        <end position="96"/>
    </location>
</feature>
<feature type="helix" evidence="20">
    <location>
        <begin position="97"/>
        <end position="133"/>
    </location>
</feature>
<feature type="helix" evidence="20">
    <location>
        <begin position="135"/>
        <end position="137"/>
    </location>
</feature>
<feature type="helix" evidence="20">
    <location>
        <begin position="138"/>
        <end position="141"/>
    </location>
</feature>
<feature type="helix" evidence="20">
    <location>
        <begin position="144"/>
        <end position="167"/>
    </location>
</feature>
<feature type="helix" evidence="20">
    <location>
        <begin position="172"/>
        <end position="207"/>
    </location>
</feature>
<feature type="helix" evidence="20">
    <location>
        <begin position="216"/>
        <end position="230"/>
    </location>
</feature>
<feature type="helix" evidence="20">
    <location>
        <begin position="233"/>
        <end position="244"/>
    </location>
</feature>
<feature type="strand" evidence="20">
    <location>
        <begin position="246"/>
        <end position="248"/>
    </location>
</feature>
<feature type="helix" evidence="20">
    <location>
        <begin position="249"/>
        <end position="255"/>
    </location>
</feature>
<feature type="helix" evidence="20">
    <location>
        <begin position="258"/>
        <end position="271"/>
    </location>
</feature>
<feature type="helix" evidence="20">
    <location>
        <begin position="273"/>
        <end position="276"/>
    </location>
</feature>
<feature type="turn" evidence="20">
    <location>
        <begin position="277"/>
        <end position="279"/>
    </location>
</feature>
<feature type="helix" evidence="20">
    <location>
        <begin position="281"/>
        <end position="290"/>
    </location>
</feature>
<sequence length="297" mass="33927">MKHIINSYENINNTARNNSDCPRVVLPEEIFFTISIVGVLENLIVLLAVFKNKNLQAPMYFFICSLAISDMLGSLYKILENILIILRNMGYLKPRGSFETTADDIIDSLFVLSLLGSIFSLSVIAADRYITIFHALRYHSIVTMRRTVVVLTVIWTFCTGTGITMVIFSHHVPTVITFTSLFPLMLVFILCLYVHMFLLARSHTRKISTLPRANMKGAITLTILLGVFIFCWAPFVLHVLLMTFCPSNPYCACYMSLFQVNGMLIMCNAVIDPFIYAFRSPELRDAFKKMIFCSRYW</sequence>
<proteinExistence type="evidence at protein level"/>
<accession>Q01718</accession>
<accession>A8K016</accession>
<accession>Q3MI45</accession>
<accession>Q504X6</accession>
<gene>
    <name type="primary">MC2R</name>
    <name type="synonym">ACTHR</name>
</gene>
<dbReference type="EMBL" id="X65633">
    <property type="protein sequence ID" value="CAA46587.1"/>
    <property type="molecule type" value="Genomic_DNA"/>
</dbReference>
<dbReference type="EMBL" id="AB065915">
    <property type="protein sequence ID" value="BAC06130.1"/>
    <property type="molecule type" value="Genomic_DNA"/>
</dbReference>
<dbReference type="EMBL" id="AK289381">
    <property type="protein sequence ID" value="BAF82070.1"/>
    <property type="molecule type" value="mRNA"/>
</dbReference>
<dbReference type="EMBL" id="AK315319">
    <property type="protein sequence ID" value="BAG37722.1"/>
    <property type="molecule type" value="mRNA"/>
</dbReference>
<dbReference type="EMBL" id="CH471113">
    <property type="protein sequence ID" value="EAX01503.1"/>
    <property type="molecule type" value="Genomic_DNA"/>
</dbReference>
<dbReference type="EMBL" id="BC069074">
    <property type="protein sequence ID" value="AAH69074.1"/>
    <property type="molecule type" value="mRNA"/>
</dbReference>
<dbReference type="EMBL" id="BC094710">
    <property type="protein sequence ID" value="AAH94710.1"/>
    <property type="molecule type" value="mRNA"/>
</dbReference>
<dbReference type="EMBL" id="BC104169">
    <property type="protein sequence ID" value="AAI04170.1"/>
    <property type="molecule type" value="mRNA"/>
</dbReference>
<dbReference type="EMBL" id="BC104170">
    <property type="protein sequence ID" value="AAI04171.1"/>
    <property type="molecule type" value="mRNA"/>
</dbReference>
<dbReference type="EMBL" id="AY225229">
    <property type="protein sequence ID" value="AAO67714.1"/>
    <property type="molecule type" value="Genomic_DNA"/>
</dbReference>
<dbReference type="CCDS" id="CCDS11869.1"/>
<dbReference type="PIR" id="C43265">
    <property type="entry name" value="C43265"/>
</dbReference>
<dbReference type="RefSeq" id="NP_000520.1">
    <property type="nucleotide sequence ID" value="NM_000529.2"/>
</dbReference>
<dbReference type="RefSeq" id="NP_001278840.1">
    <property type="nucleotide sequence ID" value="NM_001291911.1"/>
</dbReference>
<dbReference type="RefSeq" id="XP_016881270.1">
    <property type="nucleotide sequence ID" value="XM_017025781.2"/>
</dbReference>
<dbReference type="RefSeq" id="XP_047293493.1">
    <property type="nucleotide sequence ID" value="XM_047437537.1"/>
</dbReference>
<dbReference type="RefSeq" id="XP_054174631.1">
    <property type="nucleotide sequence ID" value="XM_054318656.1"/>
</dbReference>
<dbReference type="RefSeq" id="XP_054174632.1">
    <property type="nucleotide sequence ID" value="XM_054318657.1"/>
</dbReference>
<dbReference type="PDB" id="8GY7">
    <property type="method" value="EM"/>
    <property type="resolution" value="3.30 A"/>
    <property type="chains" value="R=2-297"/>
</dbReference>
<dbReference type="PDBsum" id="8GY7"/>
<dbReference type="EMDB" id="EMD-34371"/>
<dbReference type="SMR" id="Q01718"/>
<dbReference type="BioGRID" id="110328">
    <property type="interactions" value="4"/>
</dbReference>
<dbReference type="CORUM" id="Q01718"/>
<dbReference type="DIP" id="DIP-29949N"/>
<dbReference type="FunCoup" id="Q01718">
    <property type="interactions" value="849"/>
</dbReference>
<dbReference type="IntAct" id="Q01718">
    <property type="interactions" value="2"/>
</dbReference>
<dbReference type="MINT" id="Q01718"/>
<dbReference type="STRING" id="9606.ENSP00000333821"/>
<dbReference type="BindingDB" id="Q01718"/>
<dbReference type="ChEMBL" id="CHEMBL1965"/>
<dbReference type="DrugBank" id="DB11653">
    <property type="generic name" value="Bremelanotide"/>
</dbReference>
<dbReference type="DrugBank" id="DB01285">
    <property type="generic name" value="Corticotropin"/>
</dbReference>
<dbReference type="DrugBank" id="DB09334">
    <property type="generic name" value="Seractide acetate"/>
</dbReference>
<dbReference type="DrugBank" id="DB01284">
    <property type="generic name" value="Tetracosactide"/>
</dbReference>
<dbReference type="DrugCentral" id="Q01718"/>
<dbReference type="GuidetoPHARMACOLOGY" id="283"/>
<dbReference type="TCDB" id="9.A.14.2.4">
    <property type="family name" value="the g-protein-coupled receptor (gpcr) family"/>
</dbReference>
<dbReference type="GlyCosmos" id="Q01718">
    <property type="glycosylation" value="2 sites, No reported glycans"/>
</dbReference>
<dbReference type="GlyGen" id="Q01718">
    <property type="glycosylation" value="3 sites"/>
</dbReference>
<dbReference type="iPTMnet" id="Q01718"/>
<dbReference type="PhosphoSitePlus" id="Q01718"/>
<dbReference type="BioMuta" id="MC2R"/>
<dbReference type="DMDM" id="399002"/>
<dbReference type="jPOST" id="Q01718"/>
<dbReference type="PaxDb" id="9606-ENSP00000333821"/>
<dbReference type="ProteomicsDB" id="57983"/>
<dbReference type="Antibodypedia" id="21964">
    <property type="antibodies" value="284 antibodies from 32 providers"/>
</dbReference>
<dbReference type="DNASU" id="4158"/>
<dbReference type="Ensembl" id="ENST00000327606.4">
    <property type="protein sequence ID" value="ENSP00000333821.2"/>
    <property type="gene ID" value="ENSG00000185231.5"/>
</dbReference>
<dbReference type="GeneID" id="4158"/>
<dbReference type="KEGG" id="hsa:4158"/>
<dbReference type="MANE-Select" id="ENST00000327606.4">
    <property type="protein sequence ID" value="ENSP00000333821.2"/>
    <property type="RefSeq nucleotide sequence ID" value="NM_000529.2"/>
    <property type="RefSeq protein sequence ID" value="NP_000520.1"/>
</dbReference>
<dbReference type="UCSC" id="uc002ksp.2">
    <property type="organism name" value="human"/>
</dbReference>
<dbReference type="AGR" id="HGNC:6930"/>
<dbReference type="CTD" id="4158"/>
<dbReference type="DisGeNET" id="4158"/>
<dbReference type="GeneCards" id="MC2R"/>
<dbReference type="HGNC" id="HGNC:6930">
    <property type="gene designation" value="MC2R"/>
</dbReference>
<dbReference type="HPA" id="ENSG00000185231">
    <property type="expression patterns" value="Tissue enriched (adrenal)"/>
</dbReference>
<dbReference type="MalaCards" id="MC2R"/>
<dbReference type="MIM" id="202200">
    <property type="type" value="phenotype"/>
</dbReference>
<dbReference type="MIM" id="607397">
    <property type="type" value="gene"/>
</dbReference>
<dbReference type="neXtProt" id="NX_Q01718"/>
<dbReference type="OpenTargets" id="ENSG00000185231"/>
<dbReference type="Orphanet" id="361">
    <property type="disease" value="Familial glucocorticoid deficiency"/>
</dbReference>
<dbReference type="PharmGKB" id="PA30674"/>
<dbReference type="VEuPathDB" id="HostDB:ENSG00000185231"/>
<dbReference type="eggNOG" id="KOG3656">
    <property type="taxonomic scope" value="Eukaryota"/>
</dbReference>
<dbReference type="GeneTree" id="ENSGT01120000271819"/>
<dbReference type="HOGENOM" id="CLU_009579_13_0_1"/>
<dbReference type="InParanoid" id="Q01718"/>
<dbReference type="OMA" id="LIKHPGQ"/>
<dbReference type="OrthoDB" id="9894375at2759"/>
<dbReference type="PAN-GO" id="Q01718">
    <property type="GO annotations" value="5 GO annotations based on evolutionary models"/>
</dbReference>
<dbReference type="PhylomeDB" id="Q01718"/>
<dbReference type="TreeFam" id="TF332646"/>
<dbReference type="PathwayCommons" id="Q01718"/>
<dbReference type="Reactome" id="R-HSA-375276">
    <property type="pathway name" value="Peptide ligand-binding receptors"/>
</dbReference>
<dbReference type="Reactome" id="R-HSA-418555">
    <property type="pathway name" value="G alpha (s) signalling events"/>
</dbReference>
<dbReference type="Reactome" id="R-HSA-5579031">
    <property type="pathway name" value="Defective ACTH causes obesity and POMCD"/>
</dbReference>
<dbReference type="SignaLink" id="Q01718"/>
<dbReference type="SIGNOR" id="Q01718"/>
<dbReference type="BioGRID-ORCS" id="4158">
    <property type="hits" value="12 hits in 1153 CRISPR screens"/>
</dbReference>
<dbReference type="GeneWiki" id="ACTH_receptor"/>
<dbReference type="GenomeRNAi" id="4158"/>
<dbReference type="Pharos" id="Q01718">
    <property type="development level" value="Tclin"/>
</dbReference>
<dbReference type="PRO" id="PR:Q01718"/>
<dbReference type="Proteomes" id="UP000005640">
    <property type="component" value="Chromosome 18"/>
</dbReference>
<dbReference type="RNAct" id="Q01718">
    <property type="molecule type" value="protein"/>
</dbReference>
<dbReference type="Bgee" id="ENSG00000185231">
    <property type="expression patterns" value="Expressed in adrenal tissue and 30 other cell types or tissues"/>
</dbReference>
<dbReference type="ExpressionAtlas" id="Q01718">
    <property type="expression patterns" value="baseline and differential"/>
</dbReference>
<dbReference type="GO" id="GO:0005737">
    <property type="term" value="C:cytoplasm"/>
    <property type="evidence" value="ECO:0000318"/>
    <property type="project" value="GO_Central"/>
</dbReference>
<dbReference type="GO" id="GO:0005886">
    <property type="term" value="C:plasma membrane"/>
    <property type="evidence" value="ECO:0000318"/>
    <property type="project" value="GO_Central"/>
</dbReference>
<dbReference type="GO" id="GO:0004978">
    <property type="term" value="F:corticotropin receptor activity"/>
    <property type="evidence" value="ECO:0000304"/>
    <property type="project" value="ProtInc"/>
</dbReference>
<dbReference type="GO" id="GO:0004930">
    <property type="term" value="F:G protein-coupled receptor activity"/>
    <property type="evidence" value="ECO:0000318"/>
    <property type="project" value="GO_Central"/>
</dbReference>
<dbReference type="GO" id="GO:0004977">
    <property type="term" value="F:melanocortin receptor activity"/>
    <property type="evidence" value="ECO:0000304"/>
    <property type="project" value="ProtInc"/>
</dbReference>
<dbReference type="GO" id="GO:0007189">
    <property type="term" value="P:adenylate cyclase-activating G protein-coupled receptor signaling pathway"/>
    <property type="evidence" value="ECO:0000314"/>
    <property type="project" value="BHF-UCL"/>
</dbReference>
<dbReference type="GO" id="GO:0007186">
    <property type="term" value="P:G protein-coupled receptor signaling pathway"/>
    <property type="evidence" value="ECO:0000304"/>
    <property type="project" value="ProtInc"/>
</dbReference>
<dbReference type="GO" id="GO:0007187">
    <property type="term" value="P:G protein-coupled receptor signaling pathway, coupled to cyclic nucleotide second messenger"/>
    <property type="evidence" value="ECO:0000304"/>
    <property type="project" value="ProtInc"/>
</dbReference>
<dbReference type="GO" id="GO:0019222">
    <property type="term" value="P:regulation of metabolic process"/>
    <property type="evidence" value="ECO:0000318"/>
    <property type="project" value="GO_Central"/>
</dbReference>
<dbReference type="CDD" id="cd15350">
    <property type="entry name" value="7tmA_MC2R_ACTH_R"/>
    <property type="match status" value="1"/>
</dbReference>
<dbReference type="FunFam" id="1.20.1070.10:FF:000306">
    <property type="entry name" value="Adrenocorticotropic hormone receptor"/>
    <property type="match status" value="1"/>
</dbReference>
<dbReference type="Gene3D" id="1.20.1070.10">
    <property type="entry name" value="Rhodopsin 7-helix transmembrane proteins"/>
    <property type="match status" value="1"/>
</dbReference>
<dbReference type="InterPro" id="IPR001168">
    <property type="entry name" value="ACTH_rcpt"/>
</dbReference>
<dbReference type="InterPro" id="IPR000276">
    <property type="entry name" value="GPCR_Rhodpsn"/>
</dbReference>
<dbReference type="InterPro" id="IPR017452">
    <property type="entry name" value="GPCR_Rhodpsn_7TM"/>
</dbReference>
<dbReference type="InterPro" id="IPR001671">
    <property type="entry name" value="Melcrt_ACTH_rcpt"/>
</dbReference>
<dbReference type="PANTHER" id="PTHR22750">
    <property type="entry name" value="G-PROTEIN COUPLED RECEPTOR"/>
    <property type="match status" value="1"/>
</dbReference>
<dbReference type="Pfam" id="PF00001">
    <property type="entry name" value="7tm_1"/>
    <property type="match status" value="1"/>
</dbReference>
<dbReference type="PRINTS" id="PR00520">
    <property type="entry name" value="ACTROPHINR"/>
</dbReference>
<dbReference type="PRINTS" id="PR00237">
    <property type="entry name" value="GPCRRHODOPSN"/>
</dbReference>
<dbReference type="PRINTS" id="PR00534">
    <property type="entry name" value="MCRFAMILY"/>
</dbReference>
<dbReference type="SMART" id="SM01381">
    <property type="entry name" value="7TM_GPCR_Srsx"/>
    <property type="match status" value="1"/>
</dbReference>
<dbReference type="SUPFAM" id="SSF81321">
    <property type="entry name" value="Family A G protein-coupled receptor-like"/>
    <property type="match status" value="1"/>
</dbReference>
<dbReference type="PROSITE" id="PS00237">
    <property type="entry name" value="G_PROTEIN_RECEP_F1_1"/>
    <property type="match status" value="1"/>
</dbReference>
<dbReference type="PROSITE" id="PS50262">
    <property type="entry name" value="G_PROTEIN_RECEP_F1_2"/>
    <property type="match status" value="1"/>
</dbReference>
<name>ACTHR_HUMAN</name>